<geneLocation type="chloroplast"/>
<protein>
    <recommendedName>
        <fullName evidence="2">Photosystem II D2 protein</fullName>
        <shortName evidence="2">PSII D2 protein</shortName>
        <ecNumber evidence="2">1.10.3.9</ecNumber>
    </recommendedName>
    <alternativeName>
        <fullName evidence="2">Photosystem Q(A) protein</fullName>
    </alternativeName>
</protein>
<organism>
    <name type="scientific">Nasturtium officinale</name>
    <name type="common">Watercress</name>
    <name type="synonym">Rorippa nasturtium-aquaticum</name>
    <dbReference type="NCBI Taxonomy" id="65948"/>
    <lineage>
        <taxon>Eukaryota</taxon>
        <taxon>Viridiplantae</taxon>
        <taxon>Streptophyta</taxon>
        <taxon>Embryophyta</taxon>
        <taxon>Tracheophyta</taxon>
        <taxon>Spermatophyta</taxon>
        <taxon>Magnoliopsida</taxon>
        <taxon>eudicotyledons</taxon>
        <taxon>Gunneridae</taxon>
        <taxon>Pentapetalae</taxon>
        <taxon>rosids</taxon>
        <taxon>malvids</taxon>
        <taxon>Brassicales</taxon>
        <taxon>Brassicaceae</taxon>
        <taxon>Cardamineae</taxon>
        <taxon>Nasturtium</taxon>
    </lineage>
</organism>
<proteinExistence type="inferred from homology"/>
<evidence type="ECO:0000250" key="1">
    <source>
        <dbReference type="UniProtKB" id="P56761"/>
    </source>
</evidence>
<evidence type="ECO:0000255" key="2">
    <source>
        <dbReference type="HAMAP-Rule" id="MF_01383"/>
    </source>
</evidence>
<dbReference type="EC" id="1.10.3.9" evidence="2"/>
<dbReference type="EMBL" id="AP009376">
    <property type="protein sequence ID" value="BAF50633.1"/>
    <property type="molecule type" value="Genomic_DNA"/>
</dbReference>
<dbReference type="RefSeq" id="YP_001123809.1">
    <property type="nucleotide sequence ID" value="NC_009275.1"/>
</dbReference>
<dbReference type="SMR" id="A4QLS8"/>
<dbReference type="GeneID" id="4962198"/>
<dbReference type="GO" id="GO:0009535">
    <property type="term" value="C:chloroplast thylakoid membrane"/>
    <property type="evidence" value="ECO:0007669"/>
    <property type="project" value="UniProtKB-SubCell"/>
</dbReference>
<dbReference type="GO" id="GO:0009523">
    <property type="term" value="C:photosystem II"/>
    <property type="evidence" value="ECO:0007669"/>
    <property type="project" value="UniProtKB-KW"/>
</dbReference>
<dbReference type="GO" id="GO:0016168">
    <property type="term" value="F:chlorophyll binding"/>
    <property type="evidence" value="ECO:0007669"/>
    <property type="project" value="UniProtKB-UniRule"/>
</dbReference>
<dbReference type="GO" id="GO:0045156">
    <property type="term" value="F:electron transporter, transferring electrons within the cyclic electron transport pathway of photosynthesis activity"/>
    <property type="evidence" value="ECO:0007669"/>
    <property type="project" value="InterPro"/>
</dbReference>
<dbReference type="GO" id="GO:0005506">
    <property type="term" value="F:iron ion binding"/>
    <property type="evidence" value="ECO:0007669"/>
    <property type="project" value="UniProtKB-UniRule"/>
</dbReference>
<dbReference type="GO" id="GO:0010242">
    <property type="term" value="F:oxygen evolving activity"/>
    <property type="evidence" value="ECO:0007669"/>
    <property type="project" value="UniProtKB-EC"/>
</dbReference>
<dbReference type="GO" id="GO:0009772">
    <property type="term" value="P:photosynthetic electron transport in photosystem II"/>
    <property type="evidence" value="ECO:0007669"/>
    <property type="project" value="InterPro"/>
</dbReference>
<dbReference type="CDD" id="cd09288">
    <property type="entry name" value="Photosystem-II_D2"/>
    <property type="match status" value="1"/>
</dbReference>
<dbReference type="FunFam" id="1.20.85.10:FF:000001">
    <property type="entry name" value="photosystem II D2 protein-like"/>
    <property type="match status" value="1"/>
</dbReference>
<dbReference type="Gene3D" id="1.20.85.10">
    <property type="entry name" value="Photosystem II protein D1-like"/>
    <property type="match status" value="1"/>
</dbReference>
<dbReference type="HAMAP" id="MF_01383">
    <property type="entry name" value="PSII_PsbD_D2"/>
    <property type="match status" value="1"/>
</dbReference>
<dbReference type="InterPro" id="IPR055266">
    <property type="entry name" value="D1/D2"/>
</dbReference>
<dbReference type="InterPro" id="IPR036854">
    <property type="entry name" value="Photo_II_D1/D2_sf"/>
</dbReference>
<dbReference type="InterPro" id="IPR000484">
    <property type="entry name" value="Photo_RC_L/M"/>
</dbReference>
<dbReference type="InterPro" id="IPR055265">
    <property type="entry name" value="Photo_RC_L/M_CS"/>
</dbReference>
<dbReference type="InterPro" id="IPR005868">
    <property type="entry name" value="PSII_PsbD/D2"/>
</dbReference>
<dbReference type="NCBIfam" id="TIGR01152">
    <property type="entry name" value="psbD"/>
    <property type="match status" value="1"/>
</dbReference>
<dbReference type="PANTHER" id="PTHR33149:SF57">
    <property type="entry name" value="PHOTOSYSTEM II D2 PROTEIN"/>
    <property type="match status" value="1"/>
</dbReference>
<dbReference type="PANTHER" id="PTHR33149">
    <property type="entry name" value="PHOTOSYSTEM II PROTEIN D1"/>
    <property type="match status" value="1"/>
</dbReference>
<dbReference type="Pfam" id="PF00124">
    <property type="entry name" value="Photo_RC"/>
    <property type="match status" value="1"/>
</dbReference>
<dbReference type="PRINTS" id="PR00256">
    <property type="entry name" value="REACTNCENTRE"/>
</dbReference>
<dbReference type="SUPFAM" id="SSF81483">
    <property type="entry name" value="Bacterial photosystem II reaction centre, L and M subunits"/>
    <property type="match status" value="1"/>
</dbReference>
<dbReference type="PROSITE" id="PS00244">
    <property type="entry name" value="REACTION_CENTER"/>
    <property type="match status" value="1"/>
</dbReference>
<reference key="1">
    <citation type="submission" date="2007-03" db="EMBL/GenBank/DDBJ databases">
        <title>Sequencing analysis of Nasturtium officinale chloroplast DNA.</title>
        <authorList>
            <person name="Hosouchi T."/>
            <person name="Tsuruoka H."/>
            <person name="Kotani H."/>
        </authorList>
    </citation>
    <scope>NUCLEOTIDE SEQUENCE [LARGE SCALE GENOMIC DNA]</scope>
</reference>
<sequence>MTIALGKFTKDEKDLFDIMDDWLRRDRFVFVGWSGLLLFPCAYFALGGWFTGTTFVTSWYTHGLASSYLEGCNFLTAAVSTPANSLAHSLLLLWGPEAQGDFTRWCQLGGLWTFVALHGAFALIGFMLRQFELARSVQLRPYNAIAFSGPIAVFVSVFLIYPLGQSGWFFAPSFGVAAIFRFILFFQGFHNWTLNPFHMMGVAGVLGAALLCAIHGATVENTLFEDGDGANTFRAFNPTQAEETYSMVTANRFWSQIFGVAFSNKRWLHFFMLFVPVTGLWMSALGVVGLALNLRAYDFVSQEIRAAEDPEFETFYTKNILLNEGIRAWMAAQDQPHENLIFPEEVLPRGNAL</sequence>
<feature type="initiator methionine" description="Removed" evidence="1">
    <location>
        <position position="1"/>
    </location>
</feature>
<feature type="chain" id="PRO_0000359670" description="Photosystem II D2 protein">
    <location>
        <begin position="2"/>
        <end position="353"/>
    </location>
</feature>
<feature type="transmembrane region" description="Helical" evidence="2">
    <location>
        <begin position="41"/>
        <end position="61"/>
    </location>
</feature>
<feature type="transmembrane region" description="Helical" evidence="2">
    <location>
        <begin position="125"/>
        <end position="141"/>
    </location>
</feature>
<feature type="transmembrane region" description="Helical" evidence="2">
    <location>
        <begin position="153"/>
        <end position="166"/>
    </location>
</feature>
<feature type="transmembrane region" description="Helical" evidence="2">
    <location>
        <begin position="208"/>
        <end position="228"/>
    </location>
</feature>
<feature type="transmembrane region" description="Helical" evidence="2">
    <location>
        <begin position="279"/>
        <end position="295"/>
    </location>
</feature>
<feature type="binding site" description="axial binding residue" evidence="2">
    <location>
        <position position="118"/>
    </location>
    <ligand>
        <name>chlorophyll a</name>
        <dbReference type="ChEBI" id="CHEBI:58416"/>
        <label>ChlzD2</label>
    </ligand>
    <ligandPart>
        <name>Mg</name>
        <dbReference type="ChEBI" id="CHEBI:25107"/>
    </ligandPart>
</feature>
<feature type="binding site" evidence="2">
    <location>
        <position position="130"/>
    </location>
    <ligand>
        <name>pheophytin a</name>
        <dbReference type="ChEBI" id="CHEBI:136840"/>
        <label>D2</label>
    </ligand>
</feature>
<feature type="binding site" evidence="2">
    <location>
        <position position="143"/>
    </location>
    <ligand>
        <name>pheophytin a</name>
        <dbReference type="ChEBI" id="CHEBI:136840"/>
        <label>D2</label>
    </ligand>
</feature>
<feature type="binding site" description="axial binding residue" evidence="2">
    <location>
        <position position="198"/>
    </location>
    <ligand>
        <name>chlorophyll a</name>
        <dbReference type="ChEBI" id="CHEBI:58416"/>
        <label>PD2</label>
    </ligand>
    <ligandPart>
        <name>Mg</name>
        <dbReference type="ChEBI" id="CHEBI:25107"/>
    </ligandPart>
</feature>
<feature type="binding site" evidence="2">
    <location>
        <position position="215"/>
    </location>
    <ligand>
        <name>a plastoquinone</name>
        <dbReference type="ChEBI" id="CHEBI:17757"/>
        <label>Q(A)</label>
    </ligand>
</feature>
<feature type="binding site" evidence="2">
    <location>
        <position position="215"/>
    </location>
    <ligand>
        <name>Fe cation</name>
        <dbReference type="ChEBI" id="CHEBI:24875"/>
        <note>ligand shared with heterodimeric partner</note>
    </ligand>
</feature>
<feature type="binding site" evidence="2">
    <location>
        <position position="262"/>
    </location>
    <ligand>
        <name>a plastoquinone</name>
        <dbReference type="ChEBI" id="CHEBI:17757"/>
        <label>Q(A)</label>
    </ligand>
</feature>
<feature type="binding site" evidence="2">
    <location>
        <position position="269"/>
    </location>
    <ligand>
        <name>Fe cation</name>
        <dbReference type="ChEBI" id="CHEBI:24875"/>
        <note>ligand shared with heterodimeric partner</note>
    </ligand>
</feature>
<feature type="modified residue" description="N-acetylthreonine" evidence="1">
    <location>
        <position position="2"/>
    </location>
</feature>
<feature type="modified residue" description="Phosphothreonine" evidence="1">
    <location>
        <position position="2"/>
    </location>
</feature>
<name>PSBD_NASOF</name>
<comment type="function">
    <text evidence="2">Photosystem II (PSII) is a light-driven water:plastoquinone oxidoreductase that uses light energy to abstract electrons from H(2)O, generating O(2) and a proton gradient subsequently used for ATP formation. It consists of a core antenna complex that captures photons, and an electron transfer chain that converts photonic excitation into a charge separation. The D1/D2 (PsbA/PsbD) reaction center heterodimer binds P680, the primary electron donor of PSII as well as several subsequent electron acceptors. D2 is needed for assembly of a stable PSII complex.</text>
</comment>
<comment type="catalytic activity">
    <reaction evidence="2">
        <text>2 a plastoquinone + 4 hnu + 2 H2O = 2 a plastoquinol + O2</text>
        <dbReference type="Rhea" id="RHEA:36359"/>
        <dbReference type="Rhea" id="RHEA-COMP:9561"/>
        <dbReference type="Rhea" id="RHEA-COMP:9562"/>
        <dbReference type="ChEBI" id="CHEBI:15377"/>
        <dbReference type="ChEBI" id="CHEBI:15379"/>
        <dbReference type="ChEBI" id="CHEBI:17757"/>
        <dbReference type="ChEBI" id="CHEBI:30212"/>
        <dbReference type="ChEBI" id="CHEBI:62192"/>
        <dbReference type="EC" id="1.10.3.9"/>
    </reaction>
</comment>
<comment type="cofactor">
    <text evidence="2">The D1/D2 heterodimer binds P680, chlorophylls that are the primary electron donor of PSII, and subsequent electron acceptors. It shares a non-heme iron and each subunit binds pheophytin, quinone, additional chlorophylls, carotenoids and lipids. There is also a Cl(-1) ion associated with D1 and D2, which is required for oxygen evolution. The PSII complex binds additional chlorophylls, carotenoids and specific lipids.</text>
</comment>
<comment type="subunit">
    <text evidence="2">PSII is composed of 1 copy each of membrane proteins PsbA, PsbB, PsbC, PsbD, PsbE, PsbF, PsbH, PsbI, PsbJ, PsbK, PsbL, PsbM, PsbT, PsbX, PsbY, PsbZ, Psb30/Ycf12, at least 3 peripheral proteins of the oxygen-evolving complex and a large number of cofactors. It forms dimeric complexes.</text>
</comment>
<comment type="subcellular location">
    <subcellularLocation>
        <location evidence="2">Plastid</location>
        <location evidence="2">Chloroplast thylakoid membrane</location>
        <topology evidence="2">Multi-pass membrane protein</topology>
    </subcellularLocation>
</comment>
<comment type="miscellaneous">
    <text evidence="2">2 of the reaction center chlorophylls (ChlD1 and ChlD2) are entirely coordinated by water.</text>
</comment>
<comment type="similarity">
    <text evidence="2">Belongs to the reaction center PufL/M/PsbA/D family.</text>
</comment>
<keyword id="KW-0007">Acetylation</keyword>
<keyword id="KW-0148">Chlorophyll</keyword>
<keyword id="KW-0150">Chloroplast</keyword>
<keyword id="KW-0157">Chromophore</keyword>
<keyword id="KW-0249">Electron transport</keyword>
<keyword id="KW-0408">Iron</keyword>
<keyword id="KW-0460">Magnesium</keyword>
<keyword id="KW-0472">Membrane</keyword>
<keyword id="KW-0479">Metal-binding</keyword>
<keyword id="KW-0560">Oxidoreductase</keyword>
<keyword id="KW-0597">Phosphoprotein</keyword>
<keyword id="KW-0602">Photosynthesis</keyword>
<keyword id="KW-0604">Photosystem II</keyword>
<keyword id="KW-0934">Plastid</keyword>
<keyword id="KW-0793">Thylakoid</keyword>
<keyword id="KW-0812">Transmembrane</keyword>
<keyword id="KW-1133">Transmembrane helix</keyword>
<keyword id="KW-0813">Transport</keyword>
<gene>
    <name evidence="2" type="primary">psbD</name>
</gene>
<accession>A4QLS8</accession>